<name>RL15_WOLTR</name>
<sequence length="156" mass="17103">MNNAIKLNSIFTELSKKKKPKLIGRGIGCGKGKTSGRGHKGQKARSGTSINGFEGGQQSIYTRLPKRGFNPIRRNICSIINVGDVQRLIEAKKIEKNSVIDKEILHKLGFIKSIKDKIKLLNKGKLNERCVFHVDFASEAAKKSVTSIGGSVEILS</sequence>
<keyword id="KW-1185">Reference proteome</keyword>
<keyword id="KW-0687">Ribonucleoprotein</keyword>
<keyword id="KW-0689">Ribosomal protein</keyword>
<keyword id="KW-0694">RNA-binding</keyword>
<keyword id="KW-0699">rRNA-binding</keyword>
<organism>
    <name type="scientific">Wolbachia sp. subsp. Brugia malayi (strain TRS)</name>
    <dbReference type="NCBI Taxonomy" id="292805"/>
    <lineage>
        <taxon>Bacteria</taxon>
        <taxon>Pseudomonadati</taxon>
        <taxon>Pseudomonadota</taxon>
        <taxon>Alphaproteobacteria</taxon>
        <taxon>Rickettsiales</taxon>
        <taxon>Anaplasmataceae</taxon>
        <taxon>Wolbachieae</taxon>
        <taxon>Wolbachia</taxon>
    </lineage>
</organism>
<dbReference type="EMBL" id="AE017321">
    <property type="protein sequence ID" value="AAW70912.1"/>
    <property type="molecule type" value="Genomic_DNA"/>
</dbReference>
<dbReference type="RefSeq" id="WP_011256522.1">
    <property type="nucleotide sequence ID" value="NC_006833.1"/>
</dbReference>
<dbReference type="SMR" id="Q5GSW2"/>
<dbReference type="STRING" id="292805.Wbm0323"/>
<dbReference type="KEGG" id="wbm:Wbm0323"/>
<dbReference type="eggNOG" id="COG0200">
    <property type="taxonomic scope" value="Bacteria"/>
</dbReference>
<dbReference type="HOGENOM" id="CLU_055188_4_0_5"/>
<dbReference type="Proteomes" id="UP000000534">
    <property type="component" value="Chromosome"/>
</dbReference>
<dbReference type="GO" id="GO:0022625">
    <property type="term" value="C:cytosolic large ribosomal subunit"/>
    <property type="evidence" value="ECO:0007669"/>
    <property type="project" value="TreeGrafter"/>
</dbReference>
<dbReference type="GO" id="GO:0019843">
    <property type="term" value="F:rRNA binding"/>
    <property type="evidence" value="ECO:0007669"/>
    <property type="project" value="UniProtKB-UniRule"/>
</dbReference>
<dbReference type="GO" id="GO:0003735">
    <property type="term" value="F:structural constituent of ribosome"/>
    <property type="evidence" value="ECO:0007669"/>
    <property type="project" value="InterPro"/>
</dbReference>
<dbReference type="GO" id="GO:0006412">
    <property type="term" value="P:translation"/>
    <property type="evidence" value="ECO:0007669"/>
    <property type="project" value="UniProtKB-UniRule"/>
</dbReference>
<dbReference type="Gene3D" id="3.100.10.10">
    <property type="match status" value="1"/>
</dbReference>
<dbReference type="HAMAP" id="MF_01341">
    <property type="entry name" value="Ribosomal_uL15"/>
    <property type="match status" value="1"/>
</dbReference>
<dbReference type="InterPro" id="IPR030878">
    <property type="entry name" value="Ribosomal_uL15"/>
</dbReference>
<dbReference type="InterPro" id="IPR021131">
    <property type="entry name" value="Ribosomal_uL15/eL18"/>
</dbReference>
<dbReference type="InterPro" id="IPR036227">
    <property type="entry name" value="Ribosomal_uL15/eL18_sf"/>
</dbReference>
<dbReference type="InterPro" id="IPR005749">
    <property type="entry name" value="Ribosomal_uL15_bac-type"/>
</dbReference>
<dbReference type="NCBIfam" id="TIGR01071">
    <property type="entry name" value="rplO_bact"/>
    <property type="match status" value="1"/>
</dbReference>
<dbReference type="PANTHER" id="PTHR12934">
    <property type="entry name" value="50S RIBOSOMAL PROTEIN L15"/>
    <property type="match status" value="1"/>
</dbReference>
<dbReference type="PANTHER" id="PTHR12934:SF11">
    <property type="entry name" value="LARGE RIBOSOMAL SUBUNIT PROTEIN UL15M"/>
    <property type="match status" value="1"/>
</dbReference>
<dbReference type="Pfam" id="PF00828">
    <property type="entry name" value="Ribosomal_L27A"/>
    <property type="match status" value="1"/>
</dbReference>
<dbReference type="SUPFAM" id="SSF52080">
    <property type="entry name" value="Ribosomal proteins L15p and L18e"/>
    <property type="match status" value="1"/>
</dbReference>
<reference key="1">
    <citation type="journal article" date="2005" name="PLoS Biol.">
        <title>The Wolbachia genome of Brugia malayi: endosymbiont evolution within a human pathogenic nematode.</title>
        <authorList>
            <person name="Foster J."/>
            <person name="Ganatra M."/>
            <person name="Kamal I."/>
            <person name="Ware J."/>
            <person name="Makarova K."/>
            <person name="Ivanova N."/>
            <person name="Bhattacharyya A."/>
            <person name="Kapatral V."/>
            <person name="Kumar S."/>
            <person name="Posfai J."/>
            <person name="Vincze T."/>
            <person name="Ingram J."/>
            <person name="Moran L."/>
            <person name="Lapidus A."/>
            <person name="Omelchenko M."/>
            <person name="Kyrpides N."/>
            <person name="Ghedin E."/>
            <person name="Wang S."/>
            <person name="Goltsman E."/>
            <person name="Joukov V."/>
            <person name="Ostrovskaya O."/>
            <person name="Tsukerman K."/>
            <person name="Mazur M."/>
            <person name="Comb D."/>
            <person name="Koonin E."/>
            <person name="Slatko B."/>
        </authorList>
    </citation>
    <scope>NUCLEOTIDE SEQUENCE [LARGE SCALE GENOMIC DNA]</scope>
    <source>
        <strain>TRS</strain>
    </source>
</reference>
<accession>Q5GSW2</accession>
<gene>
    <name evidence="1" type="primary">rplO</name>
    <name type="ordered locus">Wbm0323</name>
</gene>
<protein>
    <recommendedName>
        <fullName evidence="1">Large ribosomal subunit protein uL15</fullName>
    </recommendedName>
    <alternativeName>
        <fullName evidence="3">50S ribosomal protein L15</fullName>
    </alternativeName>
</protein>
<comment type="function">
    <text evidence="1">Binds to the 23S rRNA.</text>
</comment>
<comment type="subunit">
    <text evidence="1">Part of the 50S ribosomal subunit.</text>
</comment>
<comment type="similarity">
    <text evidence="1">Belongs to the universal ribosomal protein uL15 family.</text>
</comment>
<feature type="chain" id="PRO_0000251585" description="Large ribosomal subunit protein uL15">
    <location>
        <begin position="1"/>
        <end position="156"/>
    </location>
</feature>
<feature type="region of interest" description="Disordered" evidence="2">
    <location>
        <begin position="25"/>
        <end position="49"/>
    </location>
</feature>
<feature type="compositionally biased region" description="Basic residues" evidence="2">
    <location>
        <begin position="34"/>
        <end position="43"/>
    </location>
</feature>
<evidence type="ECO:0000255" key="1">
    <source>
        <dbReference type="HAMAP-Rule" id="MF_01341"/>
    </source>
</evidence>
<evidence type="ECO:0000256" key="2">
    <source>
        <dbReference type="SAM" id="MobiDB-lite"/>
    </source>
</evidence>
<evidence type="ECO:0000305" key="3"/>
<proteinExistence type="inferred from homology"/>